<organism>
    <name type="scientific">Nostoc sp. (strain PCC 7120 / SAG 25.82 / UTEX 2576)</name>
    <dbReference type="NCBI Taxonomy" id="103690"/>
    <lineage>
        <taxon>Bacteria</taxon>
        <taxon>Bacillati</taxon>
        <taxon>Cyanobacteriota</taxon>
        <taxon>Cyanophyceae</taxon>
        <taxon>Nostocales</taxon>
        <taxon>Nostocaceae</taxon>
        <taxon>Nostoc</taxon>
    </lineage>
</organism>
<comment type="function">
    <text evidence="1">Cell wall formation.</text>
</comment>
<comment type="catalytic activity">
    <reaction evidence="1">
        <text>UDP-N-acetyl-alpha-D-muramate + L-alanine + ATP = UDP-N-acetyl-alpha-D-muramoyl-L-alanine + ADP + phosphate + H(+)</text>
        <dbReference type="Rhea" id="RHEA:23372"/>
        <dbReference type="ChEBI" id="CHEBI:15378"/>
        <dbReference type="ChEBI" id="CHEBI:30616"/>
        <dbReference type="ChEBI" id="CHEBI:43474"/>
        <dbReference type="ChEBI" id="CHEBI:57972"/>
        <dbReference type="ChEBI" id="CHEBI:70757"/>
        <dbReference type="ChEBI" id="CHEBI:83898"/>
        <dbReference type="ChEBI" id="CHEBI:456216"/>
        <dbReference type="EC" id="6.3.2.8"/>
    </reaction>
</comment>
<comment type="pathway">
    <text evidence="1">Cell wall biogenesis; peptidoglycan biosynthesis.</text>
</comment>
<comment type="subcellular location">
    <subcellularLocation>
        <location evidence="1">Cytoplasm</location>
    </subcellularLocation>
</comment>
<comment type="similarity">
    <text evidence="1">Belongs to the MurCDEF family.</text>
</comment>
<keyword id="KW-0067">ATP-binding</keyword>
<keyword id="KW-0131">Cell cycle</keyword>
<keyword id="KW-0132">Cell division</keyword>
<keyword id="KW-0133">Cell shape</keyword>
<keyword id="KW-0961">Cell wall biogenesis/degradation</keyword>
<keyword id="KW-0963">Cytoplasm</keyword>
<keyword id="KW-0436">Ligase</keyword>
<keyword id="KW-0547">Nucleotide-binding</keyword>
<keyword id="KW-0573">Peptidoglycan synthesis</keyword>
<keyword id="KW-1185">Reference proteome</keyword>
<feature type="chain" id="PRO_0000182045" description="UDP-N-acetylmuramate--L-alanine ligase">
    <location>
        <begin position="1"/>
        <end position="494"/>
    </location>
</feature>
<feature type="binding site" evidence="1">
    <location>
        <begin position="140"/>
        <end position="146"/>
    </location>
    <ligand>
        <name>ATP</name>
        <dbReference type="ChEBI" id="CHEBI:30616"/>
    </ligand>
</feature>
<proteinExistence type="inferred from homology"/>
<evidence type="ECO:0000255" key="1">
    <source>
        <dbReference type="HAMAP-Rule" id="MF_00046"/>
    </source>
</evidence>
<protein>
    <recommendedName>
        <fullName evidence="1">UDP-N-acetylmuramate--L-alanine ligase</fullName>
        <ecNumber evidence="1">6.3.2.8</ecNumber>
    </recommendedName>
    <alternativeName>
        <fullName evidence="1">UDP-N-acetylmuramoyl-L-alanine synthetase</fullName>
    </alternativeName>
</protein>
<dbReference type="EC" id="6.3.2.8" evidence="1"/>
<dbReference type="EMBL" id="BA000019">
    <property type="protein sequence ID" value="BAB76764.1"/>
    <property type="molecule type" value="Genomic_DNA"/>
</dbReference>
<dbReference type="PIR" id="AI2438">
    <property type="entry name" value="AI2438"/>
</dbReference>
<dbReference type="RefSeq" id="WP_010999191.1">
    <property type="nucleotide sequence ID" value="NZ_RSCN01000014.1"/>
</dbReference>
<dbReference type="SMR" id="Q8YM75"/>
<dbReference type="STRING" id="103690.gene:10497123"/>
<dbReference type="KEGG" id="ana:alr5065"/>
<dbReference type="eggNOG" id="COG0773">
    <property type="taxonomic scope" value="Bacteria"/>
</dbReference>
<dbReference type="OrthoDB" id="9804126at2"/>
<dbReference type="BRENDA" id="6.3.2.8">
    <property type="organism ID" value="8113"/>
</dbReference>
<dbReference type="UniPathway" id="UPA00219"/>
<dbReference type="Proteomes" id="UP000002483">
    <property type="component" value="Chromosome"/>
</dbReference>
<dbReference type="GO" id="GO:0005737">
    <property type="term" value="C:cytoplasm"/>
    <property type="evidence" value="ECO:0007669"/>
    <property type="project" value="UniProtKB-SubCell"/>
</dbReference>
<dbReference type="GO" id="GO:0005524">
    <property type="term" value="F:ATP binding"/>
    <property type="evidence" value="ECO:0007669"/>
    <property type="project" value="UniProtKB-UniRule"/>
</dbReference>
<dbReference type="GO" id="GO:0008763">
    <property type="term" value="F:UDP-N-acetylmuramate-L-alanine ligase activity"/>
    <property type="evidence" value="ECO:0007669"/>
    <property type="project" value="UniProtKB-UniRule"/>
</dbReference>
<dbReference type="GO" id="GO:0051301">
    <property type="term" value="P:cell division"/>
    <property type="evidence" value="ECO:0007669"/>
    <property type="project" value="UniProtKB-KW"/>
</dbReference>
<dbReference type="GO" id="GO:0071555">
    <property type="term" value="P:cell wall organization"/>
    <property type="evidence" value="ECO:0007669"/>
    <property type="project" value="UniProtKB-KW"/>
</dbReference>
<dbReference type="GO" id="GO:0009252">
    <property type="term" value="P:peptidoglycan biosynthetic process"/>
    <property type="evidence" value="ECO:0007669"/>
    <property type="project" value="UniProtKB-UniRule"/>
</dbReference>
<dbReference type="GO" id="GO:0008360">
    <property type="term" value="P:regulation of cell shape"/>
    <property type="evidence" value="ECO:0007669"/>
    <property type="project" value="UniProtKB-KW"/>
</dbReference>
<dbReference type="Gene3D" id="3.90.190.20">
    <property type="entry name" value="Mur ligase, C-terminal domain"/>
    <property type="match status" value="1"/>
</dbReference>
<dbReference type="Gene3D" id="3.40.1190.10">
    <property type="entry name" value="Mur-like, catalytic domain"/>
    <property type="match status" value="1"/>
</dbReference>
<dbReference type="Gene3D" id="3.40.50.720">
    <property type="entry name" value="NAD(P)-binding Rossmann-like Domain"/>
    <property type="match status" value="1"/>
</dbReference>
<dbReference type="HAMAP" id="MF_00046">
    <property type="entry name" value="MurC"/>
    <property type="match status" value="1"/>
</dbReference>
<dbReference type="InterPro" id="IPR036565">
    <property type="entry name" value="Mur-like_cat_sf"/>
</dbReference>
<dbReference type="InterPro" id="IPR004101">
    <property type="entry name" value="Mur_ligase_C"/>
</dbReference>
<dbReference type="InterPro" id="IPR036615">
    <property type="entry name" value="Mur_ligase_C_dom_sf"/>
</dbReference>
<dbReference type="InterPro" id="IPR013221">
    <property type="entry name" value="Mur_ligase_cen"/>
</dbReference>
<dbReference type="InterPro" id="IPR000713">
    <property type="entry name" value="Mur_ligase_N"/>
</dbReference>
<dbReference type="InterPro" id="IPR050061">
    <property type="entry name" value="MurCDEF_pg_biosynth"/>
</dbReference>
<dbReference type="InterPro" id="IPR005758">
    <property type="entry name" value="UDP-N-AcMur_Ala_ligase_MurC"/>
</dbReference>
<dbReference type="NCBIfam" id="TIGR01082">
    <property type="entry name" value="murC"/>
    <property type="match status" value="1"/>
</dbReference>
<dbReference type="PANTHER" id="PTHR43445:SF3">
    <property type="entry name" value="UDP-N-ACETYLMURAMATE--L-ALANINE LIGASE"/>
    <property type="match status" value="1"/>
</dbReference>
<dbReference type="PANTHER" id="PTHR43445">
    <property type="entry name" value="UDP-N-ACETYLMURAMATE--L-ALANINE LIGASE-RELATED"/>
    <property type="match status" value="1"/>
</dbReference>
<dbReference type="Pfam" id="PF01225">
    <property type="entry name" value="Mur_ligase"/>
    <property type="match status" value="1"/>
</dbReference>
<dbReference type="Pfam" id="PF02875">
    <property type="entry name" value="Mur_ligase_C"/>
    <property type="match status" value="1"/>
</dbReference>
<dbReference type="Pfam" id="PF08245">
    <property type="entry name" value="Mur_ligase_M"/>
    <property type="match status" value="1"/>
</dbReference>
<dbReference type="SUPFAM" id="SSF51984">
    <property type="entry name" value="MurCD N-terminal domain"/>
    <property type="match status" value="1"/>
</dbReference>
<dbReference type="SUPFAM" id="SSF53623">
    <property type="entry name" value="MurD-like peptide ligases, catalytic domain"/>
    <property type="match status" value="1"/>
</dbReference>
<dbReference type="SUPFAM" id="SSF53244">
    <property type="entry name" value="MurD-like peptide ligases, peptide-binding domain"/>
    <property type="match status" value="1"/>
</dbReference>
<name>MURC_NOSS1</name>
<sequence>MNNSVDFGGRPFHFIGIGGIGMSALAYVLAKRQLPVSGSDLRPNHITRKLESIGTHIFSRQEASNLEFFGSKVSSTEIELNTQEMFPVGKSTLPQVVCSTAINSNNLEYQAAIELGCPILHRSDVLAALINDYHSVAVAGTHGKTTTSSMIGYMLLEAGLDPTIIVGGEVNAWEGNARLGQSSYLVAEADESDGSLVKHAPEIGIITNIELDHPDHYDTLEEVVDIFQTFAKGCKTLIGSVDCETVRELLRNASGDRQQPTITYSLHQDTEADYTVTNIDYRADGTTALVWEKGKALGVLKLKLLSRHNLSNALAAVAVGRLVGLEFGEIAKGIAGFEGARRRFEFRGEVDGITFIDDYAHHPSEIRATLAAARLQARPGQRVVAIFQPHRYSRTLTFLEEFSESFSHADLVVLTDIYSAGEPNLGLISGENLAEKIAQEHPQVVYQPTLSTVCEYLLKNLRPGDLALFLGAGNLNQAIPEIITTLCAPATATL</sequence>
<accession>Q8YM75</accession>
<gene>
    <name evidence="1" type="primary">murC</name>
    <name type="ordered locus">alr5065</name>
</gene>
<reference key="1">
    <citation type="journal article" date="2001" name="DNA Res.">
        <title>Complete genomic sequence of the filamentous nitrogen-fixing cyanobacterium Anabaena sp. strain PCC 7120.</title>
        <authorList>
            <person name="Kaneko T."/>
            <person name="Nakamura Y."/>
            <person name="Wolk C.P."/>
            <person name="Kuritz T."/>
            <person name="Sasamoto S."/>
            <person name="Watanabe A."/>
            <person name="Iriguchi M."/>
            <person name="Ishikawa A."/>
            <person name="Kawashima K."/>
            <person name="Kimura T."/>
            <person name="Kishida Y."/>
            <person name="Kohara M."/>
            <person name="Matsumoto M."/>
            <person name="Matsuno A."/>
            <person name="Muraki A."/>
            <person name="Nakazaki N."/>
            <person name="Shimpo S."/>
            <person name="Sugimoto M."/>
            <person name="Takazawa M."/>
            <person name="Yamada M."/>
            <person name="Yasuda M."/>
            <person name="Tabata S."/>
        </authorList>
    </citation>
    <scope>NUCLEOTIDE SEQUENCE [LARGE SCALE GENOMIC DNA]</scope>
    <source>
        <strain>PCC 7120 / SAG 25.82 / UTEX 2576</strain>
    </source>
</reference>